<protein>
    <recommendedName>
        <fullName evidence="1">Large ribosomal subunit protein uL16</fullName>
    </recommendedName>
    <alternativeName>
        <fullName evidence="2">50S ribosomal protein L16</fullName>
    </alternativeName>
</protein>
<dbReference type="EMBL" id="AM039952">
    <property type="protein sequence ID" value="CAJ22637.1"/>
    <property type="molecule type" value="Genomic_DNA"/>
</dbReference>
<dbReference type="RefSeq" id="WP_003486706.1">
    <property type="nucleotide sequence ID" value="NZ_CP017190.1"/>
</dbReference>
<dbReference type="SMR" id="Q3BWX6"/>
<dbReference type="STRING" id="456327.BJD11_17705"/>
<dbReference type="GeneID" id="97509343"/>
<dbReference type="KEGG" id="xcv:XCV1006"/>
<dbReference type="eggNOG" id="COG0197">
    <property type="taxonomic scope" value="Bacteria"/>
</dbReference>
<dbReference type="HOGENOM" id="CLU_078858_2_1_6"/>
<dbReference type="Proteomes" id="UP000007069">
    <property type="component" value="Chromosome"/>
</dbReference>
<dbReference type="GO" id="GO:0022625">
    <property type="term" value="C:cytosolic large ribosomal subunit"/>
    <property type="evidence" value="ECO:0007669"/>
    <property type="project" value="TreeGrafter"/>
</dbReference>
<dbReference type="GO" id="GO:0019843">
    <property type="term" value="F:rRNA binding"/>
    <property type="evidence" value="ECO:0007669"/>
    <property type="project" value="UniProtKB-UniRule"/>
</dbReference>
<dbReference type="GO" id="GO:0003735">
    <property type="term" value="F:structural constituent of ribosome"/>
    <property type="evidence" value="ECO:0007669"/>
    <property type="project" value="InterPro"/>
</dbReference>
<dbReference type="GO" id="GO:0000049">
    <property type="term" value="F:tRNA binding"/>
    <property type="evidence" value="ECO:0007669"/>
    <property type="project" value="UniProtKB-KW"/>
</dbReference>
<dbReference type="GO" id="GO:0006412">
    <property type="term" value="P:translation"/>
    <property type="evidence" value="ECO:0007669"/>
    <property type="project" value="UniProtKB-UniRule"/>
</dbReference>
<dbReference type="CDD" id="cd01433">
    <property type="entry name" value="Ribosomal_L16_L10e"/>
    <property type="match status" value="1"/>
</dbReference>
<dbReference type="FunFam" id="3.90.1170.10:FF:000001">
    <property type="entry name" value="50S ribosomal protein L16"/>
    <property type="match status" value="1"/>
</dbReference>
<dbReference type="Gene3D" id="3.90.1170.10">
    <property type="entry name" value="Ribosomal protein L10e/L16"/>
    <property type="match status" value="1"/>
</dbReference>
<dbReference type="HAMAP" id="MF_01342">
    <property type="entry name" value="Ribosomal_uL16"/>
    <property type="match status" value="1"/>
</dbReference>
<dbReference type="InterPro" id="IPR047873">
    <property type="entry name" value="Ribosomal_uL16"/>
</dbReference>
<dbReference type="InterPro" id="IPR000114">
    <property type="entry name" value="Ribosomal_uL16_bact-type"/>
</dbReference>
<dbReference type="InterPro" id="IPR020798">
    <property type="entry name" value="Ribosomal_uL16_CS"/>
</dbReference>
<dbReference type="InterPro" id="IPR016180">
    <property type="entry name" value="Ribosomal_uL16_dom"/>
</dbReference>
<dbReference type="InterPro" id="IPR036920">
    <property type="entry name" value="Ribosomal_uL16_sf"/>
</dbReference>
<dbReference type="NCBIfam" id="TIGR01164">
    <property type="entry name" value="rplP_bact"/>
    <property type="match status" value="1"/>
</dbReference>
<dbReference type="PANTHER" id="PTHR12220">
    <property type="entry name" value="50S/60S RIBOSOMAL PROTEIN L16"/>
    <property type="match status" value="1"/>
</dbReference>
<dbReference type="PANTHER" id="PTHR12220:SF13">
    <property type="entry name" value="LARGE RIBOSOMAL SUBUNIT PROTEIN UL16M"/>
    <property type="match status" value="1"/>
</dbReference>
<dbReference type="Pfam" id="PF00252">
    <property type="entry name" value="Ribosomal_L16"/>
    <property type="match status" value="1"/>
</dbReference>
<dbReference type="PRINTS" id="PR00060">
    <property type="entry name" value="RIBOSOMALL16"/>
</dbReference>
<dbReference type="SUPFAM" id="SSF54686">
    <property type="entry name" value="Ribosomal protein L16p/L10e"/>
    <property type="match status" value="1"/>
</dbReference>
<dbReference type="PROSITE" id="PS00586">
    <property type="entry name" value="RIBOSOMAL_L16_1"/>
    <property type="match status" value="1"/>
</dbReference>
<dbReference type="PROSITE" id="PS00701">
    <property type="entry name" value="RIBOSOMAL_L16_2"/>
    <property type="match status" value="1"/>
</dbReference>
<sequence length="137" mass="15499">MLQPKRTKYRKMHKGRNDGLAWSGNAVSFGEYGLKATAHGQLTARQIEAARRTISRHVKKGGKMWIRVFPDKPITKKPIEVRMGSGKGNVEYWVAQIQPGRMIYEIEGIPEETAREAFRLAAAKLSVTTTFVTRTVR</sequence>
<comment type="function">
    <text evidence="1">Binds 23S rRNA and is also seen to make contacts with the A and possibly P site tRNAs.</text>
</comment>
<comment type="subunit">
    <text evidence="1">Part of the 50S ribosomal subunit.</text>
</comment>
<comment type="similarity">
    <text evidence="1">Belongs to the universal ribosomal protein uL16 family.</text>
</comment>
<organism>
    <name type="scientific">Xanthomonas euvesicatoria pv. vesicatoria (strain 85-10)</name>
    <name type="common">Xanthomonas campestris pv. vesicatoria</name>
    <dbReference type="NCBI Taxonomy" id="316273"/>
    <lineage>
        <taxon>Bacteria</taxon>
        <taxon>Pseudomonadati</taxon>
        <taxon>Pseudomonadota</taxon>
        <taxon>Gammaproteobacteria</taxon>
        <taxon>Lysobacterales</taxon>
        <taxon>Lysobacteraceae</taxon>
        <taxon>Xanthomonas</taxon>
    </lineage>
</organism>
<proteinExistence type="inferred from homology"/>
<keyword id="KW-0687">Ribonucleoprotein</keyword>
<keyword id="KW-0689">Ribosomal protein</keyword>
<keyword id="KW-0694">RNA-binding</keyword>
<keyword id="KW-0699">rRNA-binding</keyword>
<keyword id="KW-0820">tRNA-binding</keyword>
<gene>
    <name evidence="1" type="primary">rplP</name>
    <name type="ordered locus">XCV1006</name>
</gene>
<evidence type="ECO:0000255" key="1">
    <source>
        <dbReference type="HAMAP-Rule" id="MF_01342"/>
    </source>
</evidence>
<evidence type="ECO:0000305" key="2"/>
<feature type="chain" id="PRO_0000062256" description="Large ribosomal subunit protein uL16">
    <location>
        <begin position="1"/>
        <end position="137"/>
    </location>
</feature>
<accession>Q3BWX6</accession>
<reference key="1">
    <citation type="journal article" date="2005" name="J. Bacteriol.">
        <title>Insights into genome plasticity and pathogenicity of the plant pathogenic Bacterium Xanthomonas campestris pv. vesicatoria revealed by the complete genome sequence.</title>
        <authorList>
            <person name="Thieme F."/>
            <person name="Koebnik R."/>
            <person name="Bekel T."/>
            <person name="Berger C."/>
            <person name="Boch J."/>
            <person name="Buettner D."/>
            <person name="Caldana C."/>
            <person name="Gaigalat L."/>
            <person name="Goesmann A."/>
            <person name="Kay S."/>
            <person name="Kirchner O."/>
            <person name="Lanz C."/>
            <person name="Linke B."/>
            <person name="McHardy A.C."/>
            <person name="Meyer F."/>
            <person name="Mittenhuber G."/>
            <person name="Nies D.H."/>
            <person name="Niesbach-Kloesgen U."/>
            <person name="Patschkowski T."/>
            <person name="Rueckert C."/>
            <person name="Rupp O."/>
            <person name="Schneiker S."/>
            <person name="Schuster S.C."/>
            <person name="Vorhoelter F.J."/>
            <person name="Weber E."/>
            <person name="Puehler A."/>
            <person name="Bonas U."/>
            <person name="Bartels D."/>
            <person name="Kaiser O."/>
        </authorList>
    </citation>
    <scope>NUCLEOTIDE SEQUENCE [LARGE SCALE GENOMIC DNA]</scope>
    <source>
        <strain>85-10</strain>
    </source>
</reference>
<name>RL16_XANE5</name>